<organism>
    <name type="scientific">Atropa belladonna</name>
    <name type="common">Belladonna</name>
    <name type="synonym">Deadly nightshade</name>
    <dbReference type="NCBI Taxonomy" id="33113"/>
    <lineage>
        <taxon>Eukaryota</taxon>
        <taxon>Viridiplantae</taxon>
        <taxon>Streptophyta</taxon>
        <taxon>Embryophyta</taxon>
        <taxon>Tracheophyta</taxon>
        <taxon>Spermatophyta</taxon>
        <taxon>Magnoliopsida</taxon>
        <taxon>eudicotyledons</taxon>
        <taxon>Gunneridae</taxon>
        <taxon>Pentapetalae</taxon>
        <taxon>asterids</taxon>
        <taxon>lamiids</taxon>
        <taxon>Solanales</taxon>
        <taxon>Solanaceae</taxon>
        <taxon>Solanoideae</taxon>
        <taxon>Hyoscyameae</taxon>
        <taxon>Atropa</taxon>
    </lineage>
</organism>
<name>PSBT_ATRBE</name>
<proteinExistence type="inferred from homology"/>
<accession>Q8S8W1</accession>
<dbReference type="EMBL" id="AJ316582">
    <property type="protein sequence ID" value="CAC88071.1"/>
    <property type="molecule type" value="Genomic_DNA"/>
</dbReference>
<dbReference type="RefSeq" id="NP_783258.1">
    <property type="nucleotide sequence ID" value="NC_004561.1"/>
</dbReference>
<dbReference type="SMR" id="Q8S8W1"/>
<dbReference type="GeneID" id="806564"/>
<dbReference type="GO" id="GO:0009535">
    <property type="term" value="C:chloroplast thylakoid membrane"/>
    <property type="evidence" value="ECO:0007669"/>
    <property type="project" value="UniProtKB-SubCell"/>
</dbReference>
<dbReference type="GO" id="GO:0009539">
    <property type="term" value="C:photosystem II reaction center"/>
    <property type="evidence" value="ECO:0007669"/>
    <property type="project" value="InterPro"/>
</dbReference>
<dbReference type="GO" id="GO:0015979">
    <property type="term" value="P:photosynthesis"/>
    <property type="evidence" value="ECO:0007669"/>
    <property type="project" value="UniProtKB-UniRule"/>
</dbReference>
<dbReference type="HAMAP" id="MF_00808">
    <property type="entry name" value="PSII_PsbT"/>
    <property type="match status" value="1"/>
</dbReference>
<dbReference type="InterPro" id="IPR001743">
    <property type="entry name" value="PSII_PsbT"/>
</dbReference>
<dbReference type="InterPro" id="IPR037268">
    <property type="entry name" value="PSII_PsbT_sf"/>
</dbReference>
<dbReference type="PANTHER" id="PTHR36411">
    <property type="match status" value="1"/>
</dbReference>
<dbReference type="PANTHER" id="PTHR36411:SF2">
    <property type="entry name" value="PHOTOSYSTEM II REACTION CENTER PROTEIN T"/>
    <property type="match status" value="1"/>
</dbReference>
<dbReference type="Pfam" id="PF01405">
    <property type="entry name" value="PsbT"/>
    <property type="match status" value="1"/>
</dbReference>
<dbReference type="SUPFAM" id="SSF161029">
    <property type="entry name" value="Photosystem II reaction center protein T, PsbT"/>
    <property type="match status" value="1"/>
</dbReference>
<reference key="1">
    <citation type="journal article" date="2002" name="Mol. Biol. Evol.">
        <title>The plastid chromosome of Atropa belladonna and its comparison with that of Nicotiana tabacum: the role of RNA editing in generating divergence in the process of plant speciation.</title>
        <authorList>
            <person name="Schmitz-Linneweber C."/>
            <person name="Regel R."/>
            <person name="Du T.G."/>
            <person name="Hupfer H."/>
            <person name="Herrmann R.G."/>
            <person name="Maier R.M."/>
        </authorList>
    </citation>
    <scope>NUCLEOTIDE SEQUENCE [LARGE SCALE GENOMIC DNA]</scope>
    <source>
        <strain>cv. Ab5p(kan)</strain>
    </source>
</reference>
<gene>
    <name evidence="1" type="primary">psbT</name>
</gene>
<feature type="chain" id="PRO_0000217904" description="Photosystem II reaction center protein T">
    <location>
        <begin position="1"/>
        <end position="34"/>
    </location>
</feature>
<feature type="transmembrane region" description="Helical" evidence="1">
    <location>
        <begin position="3"/>
        <end position="23"/>
    </location>
</feature>
<comment type="function">
    <text evidence="1">Found at the monomer-monomer interface of the photosystem II (PS II) dimer, plays a role in assembly and dimerization of PSII. PSII is a light-driven water plastoquinone oxidoreductase, using light energy to abstract electrons from H(2)O, generating a proton gradient subsequently used for ATP formation.</text>
</comment>
<comment type="subunit">
    <text evidence="1">PSII is composed of 1 copy each of membrane proteins PsbA, PsbB, PsbC, PsbD, PsbE, PsbF, PsbH, PsbI, PsbJ, PsbK, PsbL, PsbM, PsbT, PsbY, PsbZ, Psb30/Ycf12, at least 3 peripheral proteins of the oxygen-evolving complex and a large number of cofactors. It forms dimeric complexes.</text>
</comment>
<comment type="subcellular location">
    <subcellularLocation>
        <location evidence="1">Plastid</location>
        <location evidence="1">Chloroplast thylakoid membrane</location>
        <topology evidence="1">Single-pass membrane protein</topology>
    </subcellularLocation>
</comment>
<comment type="similarity">
    <text evidence="1">Belongs to the PsbT family.</text>
</comment>
<geneLocation type="chloroplast"/>
<evidence type="ECO:0000255" key="1">
    <source>
        <dbReference type="HAMAP-Rule" id="MF_00808"/>
    </source>
</evidence>
<sequence length="34" mass="3946">MEALVYTFLLVSTLGIIFFAIFFREPPKLPTKKN</sequence>
<keyword id="KW-0150">Chloroplast</keyword>
<keyword id="KW-0472">Membrane</keyword>
<keyword id="KW-0602">Photosynthesis</keyword>
<keyword id="KW-0604">Photosystem II</keyword>
<keyword id="KW-0934">Plastid</keyword>
<keyword id="KW-0793">Thylakoid</keyword>
<keyword id="KW-0812">Transmembrane</keyword>
<keyword id="KW-1133">Transmembrane helix</keyword>
<protein>
    <recommendedName>
        <fullName evidence="1">Photosystem II reaction center protein T</fullName>
        <shortName evidence="1">PSII-T</shortName>
    </recommendedName>
</protein>